<accession>B9IV71</accession>
<gene>
    <name evidence="1" type="primary">cinA</name>
    <name type="ordered locus">BCQ_3567</name>
</gene>
<evidence type="ECO:0000255" key="1">
    <source>
        <dbReference type="HAMAP-Rule" id="MF_00226"/>
    </source>
</evidence>
<feature type="chain" id="PRO_1000124977" description="Putative competence-damage inducible protein">
    <location>
        <begin position="1"/>
        <end position="412"/>
    </location>
</feature>
<organism>
    <name type="scientific">Bacillus cereus (strain Q1)</name>
    <dbReference type="NCBI Taxonomy" id="361100"/>
    <lineage>
        <taxon>Bacteria</taxon>
        <taxon>Bacillati</taxon>
        <taxon>Bacillota</taxon>
        <taxon>Bacilli</taxon>
        <taxon>Bacillales</taxon>
        <taxon>Bacillaceae</taxon>
        <taxon>Bacillus</taxon>
        <taxon>Bacillus cereus group</taxon>
    </lineage>
</organism>
<sequence length="412" mass="45529">MNAEIIAVGTELLLGQIANTNAQFLSEKLASIGINVYYHTVVGDNNKRLQQAIEVAEERADMLIFTGGLGPTKDDLTKETIASSLEEKLVYDENALALISNYFKRTGREFTENNKKQALVLNGGTVFANDHGMAPGMGLNKNGKVYILLPGPPKEMKPMYVSYVEPFLRNFTTGENIYSRVLRFFGIGESQLEVKVQDLIDGQTNPTIAPLANDGEVTLRLTAKHQNVHEAEKLIQHVEDLILERVGEFFYGYDQEFLHYKAIELLKKKGLTLACAESLTGGLFGNQVTENAGVSSVFKGGVICYHNDVKQHVLHVPEEVLSTDGAVSKECARYLAENVRELLKADIGISFTGVAGPDASEHKEPGTVFVGLAIKDEPTVVFPLNLSGSRQQIRERSAKYGFYHLYKKLEEI</sequence>
<reference key="1">
    <citation type="journal article" date="2009" name="J. Bacteriol.">
        <title>Complete genome sequence of the extremophilic Bacillus cereus strain Q1 with industrial applications.</title>
        <authorList>
            <person name="Xiong Z."/>
            <person name="Jiang Y."/>
            <person name="Qi D."/>
            <person name="Lu H."/>
            <person name="Yang F."/>
            <person name="Yang J."/>
            <person name="Chen L."/>
            <person name="Sun L."/>
            <person name="Xu X."/>
            <person name="Xue Y."/>
            <person name="Zhu Y."/>
            <person name="Jin Q."/>
        </authorList>
    </citation>
    <scope>NUCLEOTIDE SEQUENCE [LARGE SCALE GENOMIC DNA]</scope>
    <source>
        <strain>Q1</strain>
    </source>
</reference>
<comment type="similarity">
    <text evidence="1">Belongs to the CinA family.</text>
</comment>
<name>CINA_BACCQ</name>
<protein>
    <recommendedName>
        <fullName evidence="1">Putative competence-damage inducible protein</fullName>
    </recommendedName>
</protein>
<dbReference type="EMBL" id="CP000227">
    <property type="protein sequence ID" value="ACM13995.1"/>
    <property type="molecule type" value="Genomic_DNA"/>
</dbReference>
<dbReference type="SMR" id="B9IV71"/>
<dbReference type="KEGG" id="bcq:BCQ_3567"/>
<dbReference type="HOGENOM" id="CLU_030805_9_3_9"/>
<dbReference type="Proteomes" id="UP000000441">
    <property type="component" value="Chromosome"/>
</dbReference>
<dbReference type="CDD" id="cd00885">
    <property type="entry name" value="cinA"/>
    <property type="match status" value="1"/>
</dbReference>
<dbReference type="Gene3D" id="3.30.70.2860">
    <property type="match status" value="1"/>
</dbReference>
<dbReference type="Gene3D" id="3.90.950.20">
    <property type="entry name" value="CinA-like"/>
    <property type="match status" value="1"/>
</dbReference>
<dbReference type="Gene3D" id="3.40.980.10">
    <property type="entry name" value="MoaB/Mog-like domain"/>
    <property type="match status" value="1"/>
</dbReference>
<dbReference type="HAMAP" id="MF_00226_B">
    <property type="entry name" value="CinA_B"/>
    <property type="match status" value="1"/>
</dbReference>
<dbReference type="InterPro" id="IPR050101">
    <property type="entry name" value="CinA"/>
</dbReference>
<dbReference type="InterPro" id="IPR036653">
    <property type="entry name" value="CinA-like_C"/>
</dbReference>
<dbReference type="InterPro" id="IPR008136">
    <property type="entry name" value="CinA_C"/>
</dbReference>
<dbReference type="InterPro" id="IPR041424">
    <property type="entry name" value="CinA_KH"/>
</dbReference>
<dbReference type="InterPro" id="IPR008135">
    <property type="entry name" value="Competence-induced_CinA"/>
</dbReference>
<dbReference type="InterPro" id="IPR036425">
    <property type="entry name" value="MoaB/Mog-like_dom_sf"/>
</dbReference>
<dbReference type="InterPro" id="IPR001453">
    <property type="entry name" value="MoaB/Mog_dom"/>
</dbReference>
<dbReference type="NCBIfam" id="TIGR00200">
    <property type="entry name" value="cinA_nterm"/>
    <property type="match status" value="1"/>
</dbReference>
<dbReference type="NCBIfam" id="TIGR00177">
    <property type="entry name" value="molyb_syn"/>
    <property type="match status" value="1"/>
</dbReference>
<dbReference type="NCBIfam" id="TIGR00199">
    <property type="entry name" value="PncC_domain"/>
    <property type="match status" value="1"/>
</dbReference>
<dbReference type="NCBIfam" id="NF001813">
    <property type="entry name" value="PRK00549.1"/>
    <property type="match status" value="1"/>
</dbReference>
<dbReference type="PANTHER" id="PTHR13939">
    <property type="entry name" value="NICOTINAMIDE-NUCLEOTIDE AMIDOHYDROLASE PNCC"/>
    <property type="match status" value="1"/>
</dbReference>
<dbReference type="PANTHER" id="PTHR13939:SF0">
    <property type="entry name" value="NMN AMIDOHYDROLASE-LIKE PROTEIN YFAY"/>
    <property type="match status" value="1"/>
</dbReference>
<dbReference type="Pfam" id="PF02464">
    <property type="entry name" value="CinA"/>
    <property type="match status" value="1"/>
</dbReference>
<dbReference type="Pfam" id="PF18146">
    <property type="entry name" value="CinA_KH"/>
    <property type="match status" value="1"/>
</dbReference>
<dbReference type="Pfam" id="PF00994">
    <property type="entry name" value="MoCF_biosynth"/>
    <property type="match status" value="1"/>
</dbReference>
<dbReference type="PIRSF" id="PIRSF006728">
    <property type="entry name" value="CinA"/>
    <property type="match status" value="1"/>
</dbReference>
<dbReference type="SMART" id="SM00852">
    <property type="entry name" value="MoCF_biosynth"/>
    <property type="match status" value="1"/>
</dbReference>
<dbReference type="SUPFAM" id="SSF142433">
    <property type="entry name" value="CinA-like"/>
    <property type="match status" value="1"/>
</dbReference>
<dbReference type="SUPFAM" id="SSF53218">
    <property type="entry name" value="Molybdenum cofactor biosynthesis proteins"/>
    <property type="match status" value="1"/>
</dbReference>
<proteinExistence type="inferred from homology"/>